<organism>
    <name type="scientific">Escherichia coli O157:H7</name>
    <dbReference type="NCBI Taxonomy" id="83334"/>
    <lineage>
        <taxon>Bacteria</taxon>
        <taxon>Pseudomonadati</taxon>
        <taxon>Pseudomonadota</taxon>
        <taxon>Gammaproteobacteria</taxon>
        <taxon>Enterobacterales</taxon>
        <taxon>Enterobacteriaceae</taxon>
        <taxon>Escherichia</taxon>
    </lineage>
</organism>
<comment type="function">
    <text evidence="1">Negative regulator of allantoin and glyoxylate utilization operons. Binds to the gcl promoter and to the allS-allA intergenic region (By similarity).</text>
</comment>
<sequence>MTEVRRRGRPGQAEPVAQKGAQALERGIAILQYLEKSGGSSSVSDISLNLDLPLSTTFRLLKVLQAADFVYQDSQLGWWHIGLGVFNVGAAYIHNRDVLSVAGPFMRRLMLLSGETVNVAIRNGNEAVLIGQLECKSMVRMCAPLGSRLPLHASGAGKALLYPLAEEELMSIILQTGLQQFTPTTLVDMPTLLKDLEQARELGYTVDKEEHVVGLNCIASAIYDDVGSVVAAISISGPSSRLTEDRFVSQGELVRDTARDISTALGLKAHP</sequence>
<feature type="chain" id="PRO_0000201754" description="HTH-type transcriptional repressor AllR">
    <location>
        <begin position="1"/>
        <end position="271"/>
    </location>
</feature>
<feature type="domain" description="HTH iclR-type" evidence="2">
    <location>
        <begin position="21"/>
        <end position="83"/>
    </location>
</feature>
<feature type="domain" description="IclR-ED" evidence="3">
    <location>
        <begin position="98"/>
        <end position="267"/>
    </location>
</feature>
<feature type="DNA-binding region" description="H-T-H motif" evidence="2">
    <location>
        <begin position="43"/>
        <end position="62"/>
    </location>
</feature>
<feature type="binding site" evidence="1">
    <location>
        <begin position="154"/>
        <end position="156"/>
    </location>
    <ligand>
        <name>glyoxylate</name>
        <dbReference type="ChEBI" id="CHEBI:36655"/>
    </ligand>
</feature>
<feature type="binding site" evidence="1">
    <location>
        <position position="207"/>
    </location>
    <ligand>
        <name>glyoxylate</name>
        <dbReference type="ChEBI" id="CHEBI:36655"/>
    </ligand>
</feature>
<feature type="binding site" evidence="1">
    <location>
        <position position="217"/>
    </location>
    <ligand>
        <name>glyoxylate</name>
        <dbReference type="ChEBI" id="CHEBI:36655"/>
    </ligand>
</feature>
<feature type="binding site" evidence="1">
    <location>
        <begin position="234"/>
        <end position="236"/>
    </location>
    <ligand>
        <name>glyoxylate</name>
        <dbReference type="ChEBI" id="CHEBI:36655"/>
    </ligand>
</feature>
<protein>
    <recommendedName>
        <fullName>HTH-type transcriptional repressor AllR</fullName>
    </recommendedName>
    <alternativeName>
        <fullName>Negative regulator of allantoin and glyoxylate utilization operons</fullName>
    </alternativeName>
</protein>
<reference key="1">
    <citation type="journal article" date="2001" name="Nature">
        <title>Genome sequence of enterohaemorrhagic Escherichia coli O157:H7.</title>
        <authorList>
            <person name="Perna N.T."/>
            <person name="Plunkett G. III"/>
            <person name="Burland V."/>
            <person name="Mau B."/>
            <person name="Glasner J.D."/>
            <person name="Rose D.J."/>
            <person name="Mayhew G.F."/>
            <person name="Evans P.S."/>
            <person name="Gregor J."/>
            <person name="Kirkpatrick H.A."/>
            <person name="Posfai G."/>
            <person name="Hackett J."/>
            <person name="Klink S."/>
            <person name="Boutin A."/>
            <person name="Shao Y."/>
            <person name="Miller L."/>
            <person name="Grotbeck E.J."/>
            <person name="Davis N.W."/>
            <person name="Lim A."/>
            <person name="Dimalanta E.T."/>
            <person name="Potamousis K."/>
            <person name="Apodaca J."/>
            <person name="Anantharaman T.S."/>
            <person name="Lin J."/>
            <person name="Yen G."/>
            <person name="Schwartz D.C."/>
            <person name="Welch R.A."/>
            <person name="Blattner F.R."/>
        </authorList>
    </citation>
    <scope>NUCLEOTIDE SEQUENCE [LARGE SCALE GENOMIC DNA]</scope>
    <source>
        <strain>O157:H7 / EDL933 / ATCC 700927 / EHEC</strain>
    </source>
</reference>
<reference key="2">
    <citation type="journal article" date="2001" name="DNA Res.">
        <title>Complete genome sequence of enterohemorrhagic Escherichia coli O157:H7 and genomic comparison with a laboratory strain K-12.</title>
        <authorList>
            <person name="Hayashi T."/>
            <person name="Makino K."/>
            <person name="Ohnishi M."/>
            <person name="Kurokawa K."/>
            <person name="Ishii K."/>
            <person name="Yokoyama K."/>
            <person name="Han C.-G."/>
            <person name="Ohtsubo E."/>
            <person name="Nakayama K."/>
            <person name="Murata T."/>
            <person name="Tanaka M."/>
            <person name="Tobe T."/>
            <person name="Iida T."/>
            <person name="Takami H."/>
            <person name="Honda T."/>
            <person name="Sasakawa C."/>
            <person name="Ogasawara N."/>
            <person name="Yasunaga T."/>
            <person name="Kuhara S."/>
            <person name="Shiba T."/>
            <person name="Hattori M."/>
            <person name="Shinagawa H."/>
        </authorList>
    </citation>
    <scope>NUCLEOTIDE SEQUENCE [LARGE SCALE GENOMIC DNA]</scope>
    <source>
        <strain>O157:H7 / Sakai / RIMD 0509952 / EHEC</strain>
    </source>
</reference>
<gene>
    <name type="primary">allR</name>
    <name type="ordered locus">Z0660</name>
    <name type="ordered locus">ECs0567</name>
</gene>
<evidence type="ECO:0000250" key="1"/>
<evidence type="ECO:0000255" key="2">
    <source>
        <dbReference type="PROSITE-ProRule" id="PRU00393"/>
    </source>
</evidence>
<evidence type="ECO:0000255" key="3">
    <source>
        <dbReference type="PROSITE-ProRule" id="PRU00394"/>
    </source>
</evidence>
<keyword id="KW-0238">DNA-binding</keyword>
<keyword id="KW-1185">Reference proteome</keyword>
<keyword id="KW-0678">Repressor</keyword>
<keyword id="KW-0804">Transcription</keyword>
<keyword id="KW-0805">Transcription regulation</keyword>
<accession>P0ACN6</accession>
<accession>P77734</accession>
<proteinExistence type="inferred from homology"/>
<dbReference type="EMBL" id="AE005174">
    <property type="protein sequence ID" value="AAG54862.1"/>
    <property type="molecule type" value="Genomic_DNA"/>
</dbReference>
<dbReference type="EMBL" id="BA000007">
    <property type="protein sequence ID" value="BAB33990.1"/>
    <property type="molecule type" value="Genomic_DNA"/>
</dbReference>
<dbReference type="PIR" id="B85550">
    <property type="entry name" value="B85550"/>
</dbReference>
<dbReference type="PIR" id="G90699">
    <property type="entry name" value="G90699"/>
</dbReference>
<dbReference type="RefSeq" id="NP_308594.1">
    <property type="nucleotide sequence ID" value="NC_002695.1"/>
</dbReference>
<dbReference type="RefSeq" id="WP_000141275.1">
    <property type="nucleotide sequence ID" value="NZ_VOAI01000030.1"/>
</dbReference>
<dbReference type="SMR" id="P0ACN6"/>
<dbReference type="STRING" id="155864.Z0660"/>
<dbReference type="GeneID" id="86945421"/>
<dbReference type="GeneID" id="915706"/>
<dbReference type="KEGG" id="ece:Z0660"/>
<dbReference type="KEGG" id="ecs:ECs_0567"/>
<dbReference type="PATRIC" id="fig|386585.9.peg.675"/>
<dbReference type="eggNOG" id="COG1414">
    <property type="taxonomic scope" value="Bacteria"/>
</dbReference>
<dbReference type="HOGENOM" id="CLU_062618_7_1_6"/>
<dbReference type="OMA" id="EHMDGLR"/>
<dbReference type="Proteomes" id="UP000000558">
    <property type="component" value="Chromosome"/>
</dbReference>
<dbReference type="Proteomes" id="UP000002519">
    <property type="component" value="Chromosome"/>
</dbReference>
<dbReference type="GO" id="GO:0003677">
    <property type="term" value="F:DNA binding"/>
    <property type="evidence" value="ECO:0007669"/>
    <property type="project" value="UniProtKB-KW"/>
</dbReference>
<dbReference type="GO" id="GO:0003700">
    <property type="term" value="F:DNA-binding transcription factor activity"/>
    <property type="evidence" value="ECO:0007669"/>
    <property type="project" value="TreeGrafter"/>
</dbReference>
<dbReference type="GO" id="GO:0045892">
    <property type="term" value="P:negative regulation of DNA-templated transcription"/>
    <property type="evidence" value="ECO:0007669"/>
    <property type="project" value="TreeGrafter"/>
</dbReference>
<dbReference type="FunFam" id="1.10.10.10:FF:000198">
    <property type="entry name" value="HTH-type transcriptional repressor AllR"/>
    <property type="match status" value="1"/>
</dbReference>
<dbReference type="FunFam" id="3.30.450.40:FF:000017">
    <property type="entry name" value="HTH-type transcriptional repressor AllR"/>
    <property type="match status" value="1"/>
</dbReference>
<dbReference type="Gene3D" id="3.30.450.40">
    <property type="match status" value="1"/>
</dbReference>
<dbReference type="Gene3D" id="1.10.10.10">
    <property type="entry name" value="Winged helix-like DNA-binding domain superfamily/Winged helix DNA-binding domain"/>
    <property type="match status" value="1"/>
</dbReference>
<dbReference type="InterPro" id="IPR029016">
    <property type="entry name" value="GAF-like_dom_sf"/>
</dbReference>
<dbReference type="InterPro" id="IPR050707">
    <property type="entry name" value="HTH_MetabolicPath_Reg"/>
</dbReference>
<dbReference type="InterPro" id="IPR014757">
    <property type="entry name" value="Tscrpt_reg_IclR_C"/>
</dbReference>
<dbReference type="InterPro" id="IPR005471">
    <property type="entry name" value="Tscrpt_reg_IclR_N"/>
</dbReference>
<dbReference type="InterPro" id="IPR036388">
    <property type="entry name" value="WH-like_DNA-bd_sf"/>
</dbReference>
<dbReference type="InterPro" id="IPR036390">
    <property type="entry name" value="WH_DNA-bd_sf"/>
</dbReference>
<dbReference type="NCBIfam" id="NF007548">
    <property type="entry name" value="PRK10163.1"/>
    <property type="match status" value="1"/>
</dbReference>
<dbReference type="PANTHER" id="PTHR30136">
    <property type="entry name" value="HELIX-TURN-HELIX TRANSCRIPTIONAL REGULATOR, ICLR FAMILY"/>
    <property type="match status" value="1"/>
</dbReference>
<dbReference type="PANTHER" id="PTHR30136:SF24">
    <property type="entry name" value="HTH-TYPE TRANSCRIPTIONAL REPRESSOR ALLR"/>
    <property type="match status" value="1"/>
</dbReference>
<dbReference type="Pfam" id="PF09339">
    <property type="entry name" value="HTH_IclR"/>
    <property type="match status" value="1"/>
</dbReference>
<dbReference type="Pfam" id="PF01614">
    <property type="entry name" value="IclR_C"/>
    <property type="match status" value="1"/>
</dbReference>
<dbReference type="SMART" id="SM00346">
    <property type="entry name" value="HTH_ICLR"/>
    <property type="match status" value="1"/>
</dbReference>
<dbReference type="SUPFAM" id="SSF55781">
    <property type="entry name" value="GAF domain-like"/>
    <property type="match status" value="1"/>
</dbReference>
<dbReference type="SUPFAM" id="SSF46785">
    <property type="entry name" value="Winged helix' DNA-binding domain"/>
    <property type="match status" value="1"/>
</dbReference>
<dbReference type="PROSITE" id="PS51077">
    <property type="entry name" value="HTH_ICLR"/>
    <property type="match status" value="1"/>
</dbReference>
<dbReference type="PROSITE" id="PS51078">
    <property type="entry name" value="ICLR_ED"/>
    <property type="match status" value="1"/>
</dbReference>
<name>ALLR_ECO57</name>